<evidence type="ECO:0000305" key="1"/>
<proteinExistence type="inferred from homology"/>
<organism>
    <name type="scientific">Synechocystis sp. (strain ATCC 27184 / PCC 6803 / Kazusa)</name>
    <dbReference type="NCBI Taxonomy" id="1111708"/>
    <lineage>
        <taxon>Bacteria</taxon>
        <taxon>Bacillati</taxon>
        <taxon>Cyanobacteriota</taxon>
        <taxon>Cyanophyceae</taxon>
        <taxon>Synechococcales</taxon>
        <taxon>Merismopediaceae</taxon>
        <taxon>Synechocystis</taxon>
    </lineage>
</organism>
<reference key="1">
    <citation type="journal article" date="1996" name="DNA Res.">
        <title>Sequence analysis of the genome of the unicellular cyanobacterium Synechocystis sp. strain PCC6803. II. Sequence determination of the entire genome and assignment of potential protein-coding regions.</title>
        <authorList>
            <person name="Kaneko T."/>
            <person name="Sato S."/>
            <person name="Kotani H."/>
            <person name="Tanaka A."/>
            <person name="Asamizu E."/>
            <person name="Nakamura Y."/>
            <person name="Miyajima N."/>
            <person name="Hirosawa M."/>
            <person name="Sugiura M."/>
            <person name="Sasamoto S."/>
            <person name="Kimura T."/>
            <person name="Hosouchi T."/>
            <person name="Matsuno A."/>
            <person name="Muraki A."/>
            <person name="Nakazaki N."/>
            <person name="Naruo K."/>
            <person name="Okumura S."/>
            <person name="Shimpo S."/>
            <person name="Takeuchi C."/>
            <person name="Wada T."/>
            <person name="Watanabe A."/>
            <person name="Yamada M."/>
            <person name="Yasuda M."/>
            <person name="Tabata S."/>
        </authorList>
    </citation>
    <scope>NUCLEOTIDE SEQUENCE [LARGE SCALE GENOMIC DNA]</scope>
    <source>
        <strain>ATCC 27184 / PCC 6803 / Kazusa</strain>
    </source>
</reference>
<gene>
    <name type="primary">trpF</name>
    <name type="ordered locus">sll0356</name>
</gene>
<keyword id="KW-0028">Amino-acid biosynthesis</keyword>
<keyword id="KW-0057">Aromatic amino acid biosynthesis</keyword>
<keyword id="KW-0413">Isomerase</keyword>
<keyword id="KW-1185">Reference proteome</keyword>
<keyword id="KW-0822">Tryptophan biosynthesis</keyword>
<accession>P74435</accession>
<sequence length="218" mass="23881">MAMEVKICGLRHPAQAQAIAALGFTTLGFICVEASSRYVSSREIELVLQSLTAHNKRSAIGVFANVSLPKLGEFLAQTSLNGIQLHGDESPDFCRQVKQAFPQHRLIKALRLRRSADLERAEAYYNAVDVLLLDAYHPEQLGGTGQTLPWQKLQQFRPPLPWWLAGGLTPSNVQEALNLLQPDGIDLSSGVEQGPADKDVAKVAQLRAQLDALAILQH</sequence>
<comment type="catalytic activity">
    <reaction>
        <text>N-(5-phospho-beta-D-ribosyl)anthranilate = 1-(2-carboxyphenylamino)-1-deoxy-D-ribulose 5-phosphate</text>
        <dbReference type="Rhea" id="RHEA:21540"/>
        <dbReference type="ChEBI" id="CHEBI:18277"/>
        <dbReference type="ChEBI" id="CHEBI:58613"/>
        <dbReference type="EC" id="5.3.1.24"/>
    </reaction>
</comment>
<comment type="pathway">
    <text>Amino-acid biosynthesis; L-tryptophan biosynthesis; L-tryptophan from chorismate: step 3/5.</text>
</comment>
<comment type="similarity">
    <text evidence="1">Belongs to the TrpF family.</text>
</comment>
<dbReference type="EC" id="5.3.1.24"/>
<dbReference type="EMBL" id="BA000022">
    <property type="protein sequence ID" value="BAA18536.1"/>
    <property type="molecule type" value="Genomic_DNA"/>
</dbReference>
<dbReference type="PIR" id="S76407">
    <property type="entry name" value="S76407"/>
</dbReference>
<dbReference type="SMR" id="P74435"/>
<dbReference type="FunCoup" id="P74435">
    <property type="interactions" value="212"/>
</dbReference>
<dbReference type="STRING" id="1148.gene:10499418"/>
<dbReference type="PaxDb" id="1148-1653624"/>
<dbReference type="EnsemblBacteria" id="BAA18536">
    <property type="protein sequence ID" value="BAA18536"/>
    <property type="gene ID" value="BAA18536"/>
</dbReference>
<dbReference type="KEGG" id="syn:sll0356"/>
<dbReference type="eggNOG" id="COG0135">
    <property type="taxonomic scope" value="Bacteria"/>
</dbReference>
<dbReference type="InParanoid" id="P74435"/>
<dbReference type="PhylomeDB" id="P74435"/>
<dbReference type="UniPathway" id="UPA00035">
    <property type="reaction ID" value="UER00042"/>
</dbReference>
<dbReference type="Proteomes" id="UP000001425">
    <property type="component" value="Chromosome"/>
</dbReference>
<dbReference type="GO" id="GO:0004640">
    <property type="term" value="F:phosphoribosylanthranilate isomerase activity"/>
    <property type="evidence" value="ECO:0000318"/>
    <property type="project" value="GO_Central"/>
</dbReference>
<dbReference type="GO" id="GO:0000162">
    <property type="term" value="P:L-tryptophan biosynthetic process"/>
    <property type="evidence" value="ECO:0000318"/>
    <property type="project" value="GO_Central"/>
</dbReference>
<dbReference type="CDD" id="cd00405">
    <property type="entry name" value="PRAI"/>
    <property type="match status" value="1"/>
</dbReference>
<dbReference type="Gene3D" id="3.20.20.70">
    <property type="entry name" value="Aldolase class I"/>
    <property type="match status" value="1"/>
</dbReference>
<dbReference type="HAMAP" id="MF_00135">
    <property type="entry name" value="PRAI"/>
    <property type="match status" value="1"/>
</dbReference>
<dbReference type="InterPro" id="IPR013785">
    <property type="entry name" value="Aldolase_TIM"/>
</dbReference>
<dbReference type="InterPro" id="IPR001240">
    <property type="entry name" value="PRAI_dom"/>
</dbReference>
<dbReference type="InterPro" id="IPR011060">
    <property type="entry name" value="RibuloseP-bd_barrel"/>
</dbReference>
<dbReference type="InterPro" id="IPR044643">
    <property type="entry name" value="TrpF_fam"/>
</dbReference>
<dbReference type="NCBIfam" id="NF002298">
    <property type="entry name" value="PRK01222.1-4"/>
    <property type="match status" value="1"/>
</dbReference>
<dbReference type="PANTHER" id="PTHR42894">
    <property type="entry name" value="N-(5'-PHOSPHORIBOSYL)ANTHRANILATE ISOMERASE"/>
    <property type="match status" value="1"/>
</dbReference>
<dbReference type="PANTHER" id="PTHR42894:SF1">
    <property type="entry name" value="N-(5'-PHOSPHORIBOSYL)ANTHRANILATE ISOMERASE"/>
    <property type="match status" value="1"/>
</dbReference>
<dbReference type="Pfam" id="PF00697">
    <property type="entry name" value="PRAI"/>
    <property type="match status" value="1"/>
</dbReference>
<dbReference type="SUPFAM" id="SSF51366">
    <property type="entry name" value="Ribulose-phoshate binding barrel"/>
    <property type="match status" value="1"/>
</dbReference>
<protein>
    <recommendedName>
        <fullName>N-(5'-phosphoribosyl)anthranilate isomerase</fullName>
        <shortName>PRAI</shortName>
        <ecNumber>5.3.1.24</ecNumber>
    </recommendedName>
</protein>
<feature type="chain" id="PRO_0000154389" description="N-(5'-phosphoribosyl)anthranilate isomerase">
    <location>
        <begin position="1"/>
        <end position="218"/>
    </location>
</feature>
<name>TRPF_SYNY3</name>